<gene>
    <name type="primary">CDH7</name>
    <name type="synonym">CDH7L1</name>
</gene>
<reference key="1">
    <citation type="journal article" date="2000" name="Genomics">
        <title>Characterization of three novel human cadherin genes (CDH7, CDH19, and CDH20) clustered on chromosome 18q22-q23 and with high homology to chicken cadherin-7.</title>
        <authorList>
            <person name="Kools P."/>
            <person name="Van Imschoot G."/>
            <person name="van Roy F."/>
        </authorList>
    </citation>
    <scope>NUCLEOTIDE SEQUENCE [MRNA]</scope>
    <scope>VARIANT SER-576</scope>
</reference>
<reference key="2">
    <citation type="journal article" date="2000" name="Biochem. J.">
        <title>Identification of three human type-II classic cadherins and frequent heterophilic interactions between different subclasses of type-II classic cadherins.</title>
        <authorList>
            <person name="Shimoyama Y."/>
            <person name="Tsujimoto G."/>
            <person name="Kitajima M."/>
            <person name="Natori M."/>
        </authorList>
    </citation>
    <scope>NUCLEOTIDE SEQUENCE [MRNA]</scope>
    <scope>VARIANT SER-576</scope>
</reference>
<reference key="3">
    <citation type="journal article" date="2005" name="Nature">
        <title>DNA sequence and analysis of human chromosome 18.</title>
        <authorList>
            <person name="Nusbaum C."/>
            <person name="Zody M.C."/>
            <person name="Borowsky M.L."/>
            <person name="Kamal M."/>
            <person name="Kodira C.D."/>
            <person name="Taylor T.D."/>
            <person name="Whittaker C.A."/>
            <person name="Chang J.L."/>
            <person name="Cuomo C.A."/>
            <person name="Dewar K."/>
            <person name="FitzGerald M.G."/>
            <person name="Yang X."/>
            <person name="Abouelleil A."/>
            <person name="Allen N.R."/>
            <person name="Anderson S."/>
            <person name="Bloom T."/>
            <person name="Bugalter B."/>
            <person name="Butler J."/>
            <person name="Cook A."/>
            <person name="DeCaprio D."/>
            <person name="Engels R."/>
            <person name="Garber M."/>
            <person name="Gnirke A."/>
            <person name="Hafez N."/>
            <person name="Hall J.L."/>
            <person name="Norman C.H."/>
            <person name="Itoh T."/>
            <person name="Jaffe D.B."/>
            <person name="Kuroki Y."/>
            <person name="Lehoczky J."/>
            <person name="Lui A."/>
            <person name="Macdonald P."/>
            <person name="Mauceli E."/>
            <person name="Mikkelsen T.S."/>
            <person name="Naylor J.W."/>
            <person name="Nicol R."/>
            <person name="Nguyen C."/>
            <person name="Noguchi H."/>
            <person name="O'Leary S.B."/>
            <person name="Piqani B."/>
            <person name="Smith C.L."/>
            <person name="Talamas J.A."/>
            <person name="Topham K."/>
            <person name="Totoki Y."/>
            <person name="Toyoda A."/>
            <person name="Wain H.M."/>
            <person name="Young S.K."/>
            <person name="Zeng Q."/>
            <person name="Zimmer A.R."/>
            <person name="Fujiyama A."/>
            <person name="Hattori M."/>
            <person name="Birren B.W."/>
            <person name="Sakaki Y."/>
            <person name="Lander E.S."/>
        </authorList>
    </citation>
    <scope>NUCLEOTIDE SEQUENCE [LARGE SCALE GENOMIC DNA]</scope>
</reference>
<feature type="signal peptide" evidence="2">
    <location>
        <begin position="1"/>
        <end position="27"/>
    </location>
</feature>
<feature type="propeptide" id="PRO_0000003769" evidence="2">
    <location>
        <begin position="28"/>
        <end position="47"/>
    </location>
</feature>
<feature type="chain" id="PRO_0000003770" description="Cadherin-7">
    <location>
        <begin position="48"/>
        <end position="785"/>
    </location>
</feature>
<feature type="topological domain" description="Extracellular" evidence="2">
    <location>
        <begin position="28"/>
        <end position="607"/>
    </location>
</feature>
<feature type="transmembrane region" description="Helical" evidence="2">
    <location>
        <begin position="608"/>
        <end position="628"/>
    </location>
</feature>
<feature type="topological domain" description="Cytoplasmic" evidence="2">
    <location>
        <begin position="629"/>
        <end position="785"/>
    </location>
</feature>
<feature type="domain" description="Cadherin 1" evidence="3">
    <location>
        <begin position="49"/>
        <end position="153"/>
    </location>
</feature>
<feature type="domain" description="Cadherin 2" evidence="3">
    <location>
        <begin position="154"/>
        <end position="262"/>
    </location>
</feature>
<feature type="domain" description="Cadherin 3" evidence="3">
    <location>
        <begin position="263"/>
        <end position="377"/>
    </location>
</feature>
<feature type="domain" description="Cadherin 4" evidence="3">
    <location>
        <begin position="378"/>
        <end position="482"/>
    </location>
</feature>
<feature type="domain" description="Cadherin 5" evidence="3">
    <location>
        <begin position="482"/>
        <end position="599"/>
    </location>
</feature>
<feature type="glycosylation site" description="N-linked (GlcNAc...) asparagine" evidence="2">
    <location>
        <position position="449"/>
    </location>
</feature>
<feature type="glycosylation site" description="N-linked (GlcNAc...) asparagine" evidence="2">
    <location>
        <position position="530"/>
    </location>
</feature>
<feature type="sequence variant" id="VAR_061057" description="In dbSNP:rs2306675.">
    <original>D</original>
    <variation>E</variation>
    <location>
        <position position="370"/>
    </location>
</feature>
<feature type="sequence variant" id="VAR_060247" description="In dbSNP:rs2291343." evidence="4 5">
    <original>N</original>
    <variation>S</variation>
    <location>
        <position position="576"/>
    </location>
</feature>
<feature type="sequence conflict" description="In Ref. 1; CAC13127." evidence="6" ref="1">
    <original>G</original>
    <variation>E</variation>
    <location>
        <position position="23"/>
    </location>
</feature>
<feature type="sequence conflict" description="In Ref. 1; CAC13127." evidence="6" ref="1">
    <original>S</original>
    <variation>P</variation>
    <location>
        <position position="32"/>
    </location>
</feature>
<feature type="sequence conflict" description="In Ref. 1; CAC13127." evidence="6" ref="1">
    <original>AQTCNAEAYV</original>
    <variation>TQTAMQRLC</variation>
    <location>
        <begin position="591"/>
        <end position="600"/>
    </location>
</feature>
<proteinExistence type="evidence at protein level"/>
<name>CADH7_HUMAN</name>
<comment type="function">
    <text>Cadherins are calcium-dependent cell adhesion proteins. They preferentially interact with themselves in a homophilic manner in connecting cells; cadherins may thus contribute to the sorting of heterogeneous cell types.</text>
</comment>
<comment type="subcellular location">
    <subcellularLocation>
        <location>Cell membrane</location>
        <topology>Single-pass type I membrane protein</topology>
    </subcellularLocation>
</comment>
<comment type="domain">
    <text evidence="1">Three calcium ions are usually bound at the interface of each cadherin domain and rigidify the connections, imparting a strong curvature to the full-length ectodomain.</text>
</comment>
<keyword id="KW-0106">Calcium</keyword>
<keyword id="KW-0130">Cell adhesion</keyword>
<keyword id="KW-1003">Cell membrane</keyword>
<keyword id="KW-0165">Cleavage on pair of basic residues</keyword>
<keyword id="KW-0325">Glycoprotein</keyword>
<keyword id="KW-0472">Membrane</keyword>
<keyword id="KW-0479">Metal-binding</keyword>
<keyword id="KW-1267">Proteomics identification</keyword>
<keyword id="KW-1185">Reference proteome</keyword>
<keyword id="KW-0677">Repeat</keyword>
<keyword id="KW-0732">Signal</keyword>
<keyword id="KW-0812">Transmembrane</keyword>
<keyword id="KW-1133">Transmembrane helix</keyword>
<protein>
    <recommendedName>
        <fullName>Cadherin-7</fullName>
    </recommendedName>
</protein>
<dbReference type="EMBL" id="AJ007611">
    <property type="protein sequence ID" value="CAC13127.1"/>
    <property type="molecule type" value="mRNA"/>
</dbReference>
<dbReference type="EMBL" id="AB035301">
    <property type="protein sequence ID" value="BAA87415.1"/>
    <property type="molecule type" value="mRNA"/>
</dbReference>
<dbReference type="EMBL" id="AC023394">
    <property type="status" value="NOT_ANNOTATED_CDS"/>
    <property type="molecule type" value="Genomic_DNA"/>
</dbReference>
<dbReference type="EMBL" id="AC090358">
    <property type="status" value="NOT_ANNOTATED_CDS"/>
    <property type="molecule type" value="Genomic_DNA"/>
</dbReference>
<dbReference type="CCDS" id="CCDS11993.1"/>
<dbReference type="RefSeq" id="NP_001304143.1">
    <property type="nucleotide sequence ID" value="NM_001317214.1"/>
</dbReference>
<dbReference type="RefSeq" id="NP_001349367.1">
    <property type="nucleotide sequence ID" value="NM_001362438.2"/>
</dbReference>
<dbReference type="RefSeq" id="NP_004352.2">
    <property type="nucleotide sequence ID" value="NM_004361.3"/>
</dbReference>
<dbReference type="RefSeq" id="NP_387450.1">
    <property type="nucleotide sequence ID" value="NM_033646.4"/>
</dbReference>
<dbReference type="RefSeq" id="XP_016881012.1">
    <property type="nucleotide sequence ID" value="XM_017025523.1"/>
</dbReference>
<dbReference type="SMR" id="Q9ULB5"/>
<dbReference type="BioGRID" id="107440">
    <property type="interactions" value="3"/>
</dbReference>
<dbReference type="FunCoup" id="Q9ULB5">
    <property type="interactions" value="224"/>
</dbReference>
<dbReference type="IntAct" id="Q9ULB5">
    <property type="interactions" value="2"/>
</dbReference>
<dbReference type="MINT" id="Q9ULB5"/>
<dbReference type="STRING" id="9606.ENSP00000381058"/>
<dbReference type="GlyCosmos" id="Q9ULB5">
    <property type="glycosylation" value="2 sites, No reported glycans"/>
</dbReference>
<dbReference type="GlyGen" id="Q9ULB5">
    <property type="glycosylation" value="3 sites, 1 O-linked glycan (1 site)"/>
</dbReference>
<dbReference type="iPTMnet" id="Q9ULB5"/>
<dbReference type="PhosphoSitePlus" id="Q9ULB5"/>
<dbReference type="BioMuta" id="CDH7"/>
<dbReference type="DMDM" id="296434420"/>
<dbReference type="jPOST" id="Q9ULB5"/>
<dbReference type="MassIVE" id="Q9ULB5"/>
<dbReference type="PaxDb" id="9606-ENSP00000381058"/>
<dbReference type="PeptideAtlas" id="Q9ULB5"/>
<dbReference type="ProteomicsDB" id="84971"/>
<dbReference type="Antibodypedia" id="2257">
    <property type="antibodies" value="183 antibodies from 29 providers"/>
</dbReference>
<dbReference type="DNASU" id="1005"/>
<dbReference type="Ensembl" id="ENST00000323011.7">
    <property type="protein sequence ID" value="ENSP00000319166.3"/>
    <property type="gene ID" value="ENSG00000081138.14"/>
</dbReference>
<dbReference type="Ensembl" id="ENST00000397968.4">
    <property type="protein sequence ID" value="ENSP00000381058.2"/>
    <property type="gene ID" value="ENSG00000081138.14"/>
</dbReference>
<dbReference type="GeneID" id="1005"/>
<dbReference type="KEGG" id="hsa:1005"/>
<dbReference type="MANE-Select" id="ENST00000397968.4">
    <property type="protein sequence ID" value="ENSP00000381058.2"/>
    <property type="RefSeq nucleotide sequence ID" value="NM_004361.5"/>
    <property type="RefSeq protein sequence ID" value="NP_004352.2"/>
</dbReference>
<dbReference type="UCSC" id="uc002ljz.3">
    <property type="organism name" value="human"/>
</dbReference>
<dbReference type="AGR" id="HGNC:1766"/>
<dbReference type="CTD" id="1005"/>
<dbReference type="DisGeNET" id="1005"/>
<dbReference type="GeneCards" id="CDH7"/>
<dbReference type="HGNC" id="HGNC:1766">
    <property type="gene designation" value="CDH7"/>
</dbReference>
<dbReference type="HPA" id="ENSG00000081138">
    <property type="expression patterns" value="Group enriched (brain, retina)"/>
</dbReference>
<dbReference type="MalaCards" id="CDH7"/>
<dbReference type="MIM" id="605806">
    <property type="type" value="gene"/>
</dbReference>
<dbReference type="neXtProt" id="NX_Q9ULB5"/>
<dbReference type="OpenTargets" id="ENSG00000081138"/>
<dbReference type="PharmGKB" id="PA26303"/>
<dbReference type="VEuPathDB" id="HostDB:ENSG00000081138"/>
<dbReference type="eggNOG" id="KOG3594">
    <property type="taxonomic scope" value="Eukaryota"/>
</dbReference>
<dbReference type="GeneTree" id="ENSGT00940000157031"/>
<dbReference type="HOGENOM" id="CLU_005284_3_1_1"/>
<dbReference type="InParanoid" id="Q9ULB5"/>
<dbReference type="OMA" id="YETMVCE"/>
<dbReference type="OrthoDB" id="6250271at2759"/>
<dbReference type="PAN-GO" id="Q9ULB5">
    <property type="GO annotations" value="9 GO annotations based on evolutionary models"/>
</dbReference>
<dbReference type="PhylomeDB" id="Q9ULB5"/>
<dbReference type="TreeFam" id="TF329887"/>
<dbReference type="PathwayCommons" id="Q9ULB5"/>
<dbReference type="Reactome" id="R-HSA-418990">
    <property type="pathway name" value="Adherens junctions interactions"/>
</dbReference>
<dbReference type="SignaLink" id="Q9ULB5"/>
<dbReference type="SIGNOR" id="Q9ULB5"/>
<dbReference type="BioGRID-ORCS" id="1005">
    <property type="hits" value="12 hits in 1136 CRISPR screens"/>
</dbReference>
<dbReference type="ChiTaRS" id="CDH7">
    <property type="organism name" value="human"/>
</dbReference>
<dbReference type="GenomeRNAi" id="1005"/>
<dbReference type="Pharos" id="Q9ULB5">
    <property type="development level" value="Tbio"/>
</dbReference>
<dbReference type="PRO" id="PR:Q9ULB5"/>
<dbReference type="Proteomes" id="UP000005640">
    <property type="component" value="Chromosome 18"/>
</dbReference>
<dbReference type="RNAct" id="Q9ULB5">
    <property type="molecule type" value="protein"/>
</dbReference>
<dbReference type="Bgee" id="ENSG00000081138">
    <property type="expression patterns" value="Expressed in sural nerve and 59 other cell types or tissues"/>
</dbReference>
<dbReference type="ExpressionAtlas" id="Q9ULB5">
    <property type="expression patterns" value="baseline and differential"/>
</dbReference>
<dbReference type="GO" id="GO:0005912">
    <property type="term" value="C:adherens junction"/>
    <property type="evidence" value="ECO:0000318"/>
    <property type="project" value="GO_Central"/>
</dbReference>
<dbReference type="GO" id="GO:0016342">
    <property type="term" value="C:catenin complex"/>
    <property type="evidence" value="ECO:0000318"/>
    <property type="project" value="GO_Central"/>
</dbReference>
<dbReference type="GO" id="GO:0005886">
    <property type="term" value="C:plasma membrane"/>
    <property type="evidence" value="ECO:0000304"/>
    <property type="project" value="Reactome"/>
</dbReference>
<dbReference type="GO" id="GO:0008013">
    <property type="term" value="F:beta-catenin binding"/>
    <property type="evidence" value="ECO:0000318"/>
    <property type="project" value="GO_Central"/>
</dbReference>
<dbReference type="GO" id="GO:0045296">
    <property type="term" value="F:cadherin binding"/>
    <property type="evidence" value="ECO:0000318"/>
    <property type="project" value="GO_Central"/>
</dbReference>
<dbReference type="GO" id="GO:0005509">
    <property type="term" value="F:calcium ion binding"/>
    <property type="evidence" value="ECO:0007669"/>
    <property type="project" value="InterPro"/>
</dbReference>
<dbReference type="GO" id="GO:0034332">
    <property type="term" value="P:adherens junction organization"/>
    <property type="evidence" value="ECO:0000318"/>
    <property type="project" value="GO_Central"/>
</dbReference>
<dbReference type="GO" id="GO:0016339">
    <property type="term" value="P:calcium-dependent cell-cell adhesion via plasma membrane cell adhesion molecules"/>
    <property type="evidence" value="ECO:0000318"/>
    <property type="project" value="GO_Central"/>
</dbReference>
<dbReference type="GO" id="GO:0016477">
    <property type="term" value="P:cell migration"/>
    <property type="evidence" value="ECO:0000318"/>
    <property type="project" value="GO_Central"/>
</dbReference>
<dbReference type="GO" id="GO:0000902">
    <property type="term" value="P:cell morphogenesis"/>
    <property type="evidence" value="ECO:0000318"/>
    <property type="project" value="GO_Central"/>
</dbReference>
<dbReference type="GO" id="GO:0098609">
    <property type="term" value="P:cell-cell adhesion"/>
    <property type="evidence" value="ECO:0000303"/>
    <property type="project" value="UniProtKB"/>
</dbReference>
<dbReference type="GO" id="GO:0044331">
    <property type="term" value="P:cell-cell adhesion mediated by cadherin"/>
    <property type="evidence" value="ECO:0000318"/>
    <property type="project" value="GO_Central"/>
</dbReference>
<dbReference type="GO" id="GO:0007043">
    <property type="term" value="P:cell-cell junction assembly"/>
    <property type="evidence" value="ECO:0000318"/>
    <property type="project" value="GO_Central"/>
</dbReference>
<dbReference type="GO" id="GO:0007156">
    <property type="term" value="P:homophilic cell adhesion via plasma membrane adhesion molecules"/>
    <property type="evidence" value="ECO:0007669"/>
    <property type="project" value="InterPro"/>
</dbReference>
<dbReference type="CDD" id="cd11304">
    <property type="entry name" value="Cadherin_repeat"/>
    <property type="match status" value="5"/>
</dbReference>
<dbReference type="FunFam" id="4.10.900.10:FF:000001">
    <property type="entry name" value="Cadherin 2"/>
    <property type="match status" value="1"/>
</dbReference>
<dbReference type="FunFam" id="2.60.40.60:FF:000008">
    <property type="entry name" value="Cadherin 24"/>
    <property type="match status" value="1"/>
</dbReference>
<dbReference type="FunFam" id="2.60.40.60:FF:000009">
    <property type="entry name" value="Cadherin 24"/>
    <property type="match status" value="1"/>
</dbReference>
<dbReference type="FunFam" id="2.60.40.60:FF:000012">
    <property type="entry name" value="Cadherin 24"/>
    <property type="match status" value="1"/>
</dbReference>
<dbReference type="FunFam" id="2.60.40.60:FF:000017">
    <property type="entry name" value="Cadherin 24"/>
    <property type="match status" value="1"/>
</dbReference>
<dbReference type="FunFam" id="2.60.40.60:FF:000014">
    <property type="entry name" value="Cadherin 8"/>
    <property type="match status" value="1"/>
</dbReference>
<dbReference type="Gene3D" id="2.60.40.60">
    <property type="entry name" value="Cadherins"/>
    <property type="match status" value="5"/>
</dbReference>
<dbReference type="Gene3D" id="4.10.900.10">
    <property type="entry name" value="TCF3-CBD (Catenin binding domain)"/>
    <property type="match status" value="1"/>
</dbReference>
<dbReference type="InterPro" id="IPR039808">
    <property type="entry name" value="Cadherin"/>
</dbReference>
<dbReference type="InterPro" id="IPR002126">
    <property type="entry name" value="Cadherin-like_dom"/>
</dbReference>
<dbReference type="InterPro" id="IPR015919">
    <property type="entry name" value="Cadherin-like_sf"/>
</dbReference>
<dbReference type="InterPro" id="IPR020894">
    <property type="entry name" value="Cadherin_CS"/>
</dbReference>
<dbReference type="InterPro" id="IPR000233">
    <property type="entry name" value="Cadherin_Y-type_LIR"/>
</dbReference>
<dbReference type="InterPro" id="IPR027397">
    <property type="entry name" value="Catenin-bd_sf"/>
</dbReference>
<dbReference type="PANTHER" id="PTHR24027">
    <property type="entry name" value="CADHERIN-23"/>
    <property type="match status" value="1"/>
</dbReference>
<dbReference type="PANTHER" id="PTHR24027:SF91">
    <property type="entry name" value="CADHERIN-7"/>
    <property type="match status" value="1"/>
</dbReference>
<dbReference type="Pfam" id="PF01049">
    <property type="entry name" value="CADH_Y-type_LIR"/>
    <property type="match status" value="1"/>
</dbReference>
<dbReference type="Pfam" id="PF00028">
    <property type="entry name" value="Cadherin"/>
    <property type="match status" value="5"/>
</dbReference>
<dbReference type="PRINTS" id="PR00205">
    <property type="entry name" value="CADHERIN"/>
</dbReference>
<dbReference type="SMART" id="SM00112">
    <property type="entry name" value="CA"/>
    <property type="match status" value="5"/>
</dbReference>
<dbReference type="SUPFAM" id="SSF49313">
    <property type="entry name" value="Cadherin-like"/>
    <property type="match status" value="5"/>
</dbReference>
<dbReference type="PROSITE" id="PS00232">
    <property type="entry name" value="CADHERIN_1"/>
    <property type="match status" value="3"/>
</dbReference>
<dbReference type="PROSITE" id="PS50268">
    <property type="entry name" value="CADHERIN_2"/>
    <property type="match status" value="5"/>
</dbReference>
<organism>
    <name type="scientific">Homo sapiens</name>
    <name type="common">Human</name>
    <dbReference type="NCBI Taxonomy" id="9606"/>
    <lineage>
        <taxon>Eukaryota</taxon>
        <taxon>Metazoa</taxon>
        <taxon>Chordata</taxon>
        <taxon>Craniata</taxon>
        <taxon>Vertebrata</taxon>
        <taxon>Euteleostomi</taxon>
        <taxon>Mammalia</taxon>
        <taxon>Eutheria</taxon>
        <taxon>Euarchontoglires</taxon>
        <taxon>Primates</taxon>
        <taxon>Haplorrhini</taxon>
        <taxon>Catarrhini</taxon>
        <taxon>Hominidae</taxon>
        <taxon>Homo</taxon>
    </lineage>
</organism>
<sequence>MKLGKVEFCHFLQLIALFLCFSGMSQAELSRSRSKPYFQSGRSRTKRSWVWNQFFVLEEYMGSDPLYVGKLHSDVDKGDGSIKYILSGEGASSIFIIDENTGDIHATKRLDREEQAYYTLRAQALDRLTNKPVEPESEFVIKIQDINDNEPKFLDGPYTAGVPEMSPVGTSVVQVTATDADDPTYGNSARVVYSILQGQPYFSVEPKTGVIKTALPNMDREAKDQYLLVIQAKDMVGQNGGLSGTTSVTVTLTDVNDNPPRFPRRSYQYNVPESLPVASVVARIKAADADIGANAEMEYKIVDGDGLGIFKISVDKETQEGIITIQKELDFEAKTSYTLRIEAANKDADPRFLSLGPFSDTTTVKIIVEDVDEPPVFSSPLYPMEVSEATQVGNIIGTVAAHDPDSSNSPVRYSIDRNTDLERYFNIDANSGVITTAKSLDRETNAIHNITVLAMESQNPSQVGRGYVAITILDINDNAPEFAMDYETTVCENAQPGQVIQKISAVDKDEPSNGHQFYFSLTTDATNNHNFSLKDNKDNTASILTRRNGFRRQEQSVYYLPIFIVDSGSPSLSSTNTLTIRVCDCDADGVAQTCNAEAYVLPAGLSTGALIAILACVLTLLVLILLIVTMRRRKKEPLIFDEERDIRENIVRYDDEGGGEEDTEAFDMAALRNLNVIRDTKTRRDVTPEIQFLSRPAFKSIPDNVIFREFIWERLKEADVDPGAPPYDSLQTYAFEGNGSVAESLSSLDSISSNSDQNYDYLSDWGPRFKRLADMYGTGQESLYS</sequence>
<evidence type="ECO:0000250" key="1"/>
<evidence type="ECO:0000255" key="2"/>
<evidence type="ECO:0000255" key="3">
    <source>
        <dbReference type="PROSITE-ProRule" id="PRU00043"/>
    </source>
</evidence>
<evidence type="ECO:0000269" key="4">
    <source>
    </source>
</evidence>
<evidence type="ECO:0000269" key="5">
    <source>
    </source>
</evidence>
<evidence type="ECO:0000305" key="6"/>
<accession>Q9ULB5</accession>
<accession>Q9H157</accession>